<organism>
    <name type="scientific">Parasynechococcus marenigrum (strain WH8102)</name>
    <dbReference type="NCBI Taxonomy" id="84588"/>
    <lineage>
        <taxon>Bacteria</taxon>
        <taxon>Bacillati</taxon>
        <taxon>Cyanobacteriota</taxon>
        <taxon>Cyanophyceae</taxon>
        <taxon>Synechococcales</taxon>
        <taxon>Prochlorococcaceae</taxon>
        <taxon>Parasynechococcus</taxon>
        <taxon>Parasynechococcus marenigrum</taxon>
    </lineage>
</organism>
<gene>
    <name evidence="1" type="primary">rpmE</name>
    <name evidence="1" type="synonym">rpl31</name>
    <name type="ordered locus">SYNW2095</name>
</gene>
<evidence type="ECO:0000255" key="1">
    <source>
        <dbReference type="HAMAP-Rule" id="MF_00501"/>
    </source>
</evidence>
<evidence type="ECO:0000305" key="2"/>
<proteinExistence type="inferred from homology"/>
<reference key="1">
    <citation type="journal article" date="2003" name="Nature">
        <title>The genome of a motile marine Synechococcus.</title>
        <authorList>
            <person name="Palenik B."/>
            <person name="Brahamsha B."/>
            <person name="Larimer F.W."/>
            <person name="Land M.L."/>
            <person name="Hauser L."/>
            <person name="Chain P."/>
            <person name="Lamerdin J.E."/>
            <person name="Regala W."/>
            <person name="Allen E.E."/>
            <person name="McCarren J."/>
            <person name="Paulsen I.T."/>
            <person name="Dufresne A."/>
            <person name="Partensky F."/>
            <person name="Webb E.A."/>
            <person name="Waterbury J."/>
        </authorList>
    </citation>
    <scope>NUCLEOTIDE SEQUENCE [LARGE SCALE GENOMIC DNA]</scope>
    <source>
        <strain>WH8102</strain>
    </source>
</reference>
<name>RL31_PARMW</name>
<feature type="chain" id="PRO_0000173167" description="Large ribosomal subunit protein bL31">
    <location>
        <begin position="1"/>
        <end position="86"/>
    </location>
</feature>
<dbReference type="EMBL" id="BX569694">
    <property type="protein sequence ID" value="CAE08610.1"/>
    <property type="molecule type" value="Genomic_DNA"/>
</dbReference>
<dbReference type="RefSeq" id="WP_011128952.1">
    <property type="nucleotide sequence ID" value="NC_005070.1"/>
</dbReference>
<dbReference type="STRING" id="84588.SYNW2095"/>
<dbReference type="KEGG" id="syw:SYNW2095"/>
<dbReference type="eggNOG" id="COG0254">
    <property type="taxonomic scope" value="Bacteria"/>
</dbReference>
<dbReference type="HOGENOM" id="CLU_114306_1_2_3"/>
<dbReference type="Proteomes" id="UP000001422">
    <property type="component" value="Chromosome"/>
</dbReference>
<dbReference type="GO" id="GO:1990904">
    <property type="term" value="C:ribonucleoprotein complex"/>
    <property type="evidence" value="ECO:0007669"/>
    <property type="project" value="UniProtKB-KW"/>
</dbReference>
<dbReference type="GO" id="GO:0005840">
    <property type="term" value="C:ribosome"/>
    <property type="evidence" value="ECO:0007669"/>
    <property type="project" value="UniProtKB-KW"/>
</dbReference>
<dbReference type="GO" id="GO:0019843">
    <property type="term" value="F:rRNA binding"/>
    <property type="evidence" value="ECO:0007669"/>
    <property type="project" value="UniProtKB-KW"/>
</dbReference>
<dbReference type="GO" id="GO:0003735">
    <property type="term" value="F:structural constituent of ribosome"/>
    <property type="evidence" value="ECO:0007669"/>
    <property type="project" value="InterPro"/>
</dbReference>
<dbReference type="GO" id="GO:0006412">
    <property type="term" value="P:translation"/>
    <property type="evidence" value="ECO:0007669"/>
    <property type="project" value="UniProtKB-UniRule"/>
</dbReference>
<dbReference type="Gene3D" id="4.10.830.30">
    <property type="entry name" value="Ribosomal protein L31"/>
    <property type="match status" value="1"/>
</dbReference>
<dbReference type="HAMAP" id="MF_00501">
    <property type="entry name" value="Ribosomal_bL31_1"/>
    <property type="match status" value="1"/>
</dbReference>
<dbReference type="InterPro" id="IPR034704">
    <property type="entry name" value="Ribosomal_bL28/bL31-like_sf"/>
</dbReference>
<dbReference type="InterPro" id="IPR002150">
    <property type="entry name" value="Ribosomal_bL31"/>
</dbReference>
<dbReference type="InterPro" id="IPR027491">
    <property type="entry name" value="Ribosomal_bL31_A"/>
</dbReference>
<dbReference type="InterPro" id="IPR042105">
    <property type="entry name" value="Ribosomal_bL31_sf"/>
</dbReference>
<dbReference type="NCBIfam" id="TIGR00105">
    <property type="entry name" value="L31"/>
    <property type="match status" value="1"/>
</dbReference>
<dbReference type="NCBIfam" id="NF000612">
    <property type="entry name" value="PRK00019.1"/>
    <property type="match status" value="1"/>
</dbReference>
<dbReference type="NCBIfam" id="NF001809">
    <property type="entry name" value="PRK00528.1"/>
    <property type="match status" value="1"/>
</dbReference>
<dbReference type="PANTHER" id="PTHR33280">
    <property type="entry name" value="50S RIBOSOMAL PROTEIN L31, CHLOROPLASTIC"/>
    <property type="match status" value="1"/>
</dbReference>
<dbReference type="PANTHER" id="PTHR33280:SF1">
    <property type="entry name" value="LARGE RIBOSOMAL SUBUNIT PROTEIN BL31C"/>
    <property type="match status" value="1"/>
</dbReference>
<dbReference type="Pfam" id="PF01197">
    <property type="entry name" value="Ribosomal_L31"/>
    <property type="match status" value="1"/>
</dbReference>
<dbReference type="PRINTS" id="PR01249">
    <property type="entry name" value="RIBOSOMALL31"/>
</dbReference>
<dbReference type="SUPFAM" id="SSF143800">
    <property type="entry name" value="L28p-like"/>
    <property type="match status" value="1"/>
</dbReference>
<dbReference type="PROSITE" id="PS01143">
    <property type="entry name" value="RIBOSOMAL_L31"/>
    <property type="match status" value="1"/>
</dbReference>
<comment type="function">
    <text evidence="1">Binds the 23S rRNA.</text>
</comment>
<comment type="subunit">
    <text evidence="1">Part of the 50S ribosomal subunit.</text>
</comment>
<comment type="similarity">
    <text evidence="1">Belongs to the bacterial ribosomal protein bL31 family. Type A subfamily.</text>
</comment>
<accession>Q7U4H3</accession>
<keyword id="KW-0687">Ribonucleoprotein</keyword>
<keyword id="KW-0689">Ribosomal protein</keyword>
<keyword id="KW-0694">RNA-binding</keyword>
<keyword id="KW-0699">rRNA-binding</keyword>
<protein>
    <recommendedName>
        <fullName evidence="1">Large ribosomal subunit protein bL31</fullName>
    </recommendedName>
    <alternativeName>
        <fullName evidence="2">50S ribosomal protein L31</fullName>
    </alternativeName>
</protein>
<sequence length="86" mass="9537">MPKPDIHPTWYPDAKVICNGEVVMTTGSTQPEIHVDVWSGNHPFFTGTQKILDTEGRVDRFMKKYGMGQKKSGDKAKAEAKADAKS</sequence>